<sequence>MGLSPGAEGEYALRLPRIPPPLPKPASRTASTGPKDQPPALRRSAVPHSGLNSISPLELEESVGFAALVQLPAKQPPPGTLEQGRSIQQGEKAVVSLETTPSQKADWSSIPKPENEGKLIKQAAEGKPRPRPGDLIEIFRIGYEHWAIYVEDDCVVHLAPPSEEFEVGSITSIFSNRAVVKYSRLEDVLHGCSWKVNNKLDGTYLPLPVDKIIQRTKKMVNKIVQYSLIEGNCEHFVNGLRYGVPRSQQVEHALMEGAKAAGAVISAVVDSIKPKPITA</sequence>
<organism>
    <name type="scientific">Homo sapiens</name>
    <name type="common">Human</name>
    <dbReference type="NCBI Taxonomy" id="9606"/>
    <lineage>
        <taxon>Eukaryota</taxon>
        <taxon>Metazoa</taxon>
        <taxon>Chordata</taxon>
        <taxon>Craniata</taxon>
        <taxon>Vertebrata</taxon>
        <taxon>Euteleostomi</taxon>
        <taxon>Mammalia</taxon>
        <taxon>Eutheria</taxon>
        <taxon>Euarchontoglires</taxon>
        <taxon>Primates</taxon>
        <taxon>Haplorrhini</taxon>
        <taxon>Catarrhini</taxon>
        <taxon>Hominidae</taxon>
        <taxon>Homo</taxon>
    </lineage>
</organism>
<feature type="chain" id="PRO_0000152488" description="Phospholipase A and acyltransferase 5">
    <location>
        <begin position="1"/>
        <end position="279"/>
    </location>
</feature>
<feature type="domain" description="LRAT" evidence="2">
    <location>
        <begin position="135"/>
        <end position="249"/>
    </location>
</feature>
<feature type="region of interest" description="Disordered" evidence="3">
    <location>
        <begin position="1"/>
        <end position="53"/>
    </location>
</feature>
<feature type="region of interest" description="Disordered" evidence="3">
    <location>
        <begin position="70"/>
        <end position="117"/>
    </location>
</feature>
<feature type="compositionally biased region" description="Polar residues" evidence="3">
    <location>
        <begin position="97"/>
        <end position="106"/>
    </location>
</feature>
<feature type="active site" evidence="2">
    <location>
        <position position="145"/>
    </location>
</feature>
<feature type="active site" evidence="2">
    <location>
        <position position="157"/>
    </location>
</feature>
<feature type="active site" description="Acyl-thioester intermediate" evidence="2">
    <location>
        <position position="233"/>
    </location>
</feature>
<feature type="splice variant" id="VSP_045825" description="In isoform 3." evidence="10">
    <location>
        <begin position="50"/>
        <end position="59"/>
    </location>
</feature>
<feature type="splice variant" id="VSP_045826" description="In isoform 2." evidence="10">
    <original>EHFVNGLRYGVPRSQQVEHALMEGAKAAGAVISAVVDSIKPKPITA</original>
    <variation>RARPDGRSEGCWSSYFSCSG</variation>
    <location>
        <begin position="234"/>
        <end position="279"/>
    </location>
</feature>
<feature type="sequence variant" id="VAR_049477" description="In dbSNP:rs10897424." evidence="4 6 7">
    <original>S</original>
    <variation>G</variation>
    <location>
        <position position="31"/>
    </location>
</feature>
<feature type="sequence variant" id="VAR_024486" description="In dbSNP:rs940611.">
    <original>A</original>
    <variation>P</variation>
    <location>
        <position position="93"/>
    </location>
</feature>
<feature type="sequence variant" id="VAR_049478" description="In dbSNP:rs35735923.">
    <original>Q</original>
    <variation>R</variation>
    <location>
        <position position="214"/>
    </location>
</feature>
<feature type="sequence variant" id="VAR_049479" description="In dbSNP:rs35375575.">
    <original>A</original>
    <variation>V</variation>
    <location>
        <position position="258"/>
    </location>
</feature>
<comment type="function">
    <text evidence="4 5 9">Exhibits both phospholipase A1/2 and acyltransferase activities (PubMed:22825852, PubMed:26503625). Shows phospholipase A1 (PLA1) and A2 (PLA2) activity, catalyzing the calcium-independent release of fatty acids from the sn-1 or sn-2 position of glycerophospholipids (PubMed:22825852). Shows N-acyltransferase activity, catalyzing the calcium-independent transfer of a fatty acyl group at the sn-1 position of phosphatidylcholine (PC) and other glycerophospholipids to the primary amine of phosphatidylethanolamine (PE), forming N-acylphosphatidylethanolamine (NAPE), which serves as precursor for N-acylethanolamines (NAEs) (PubMed:19000777, PubMed:22825852).</text>
</comment>
<comment type="catalytic activity">
    <reaction evidence="4 5">
        <text>a 1,2-diacyl-sn-glycero-3-phosphocholine + H2O = a 1-acyl-sn-glycero-3-phosphocholine + a fatty acid + H(+)</text>
        <dbReference type="Rhea" id="RHEA:15801"/>
        <dbReference type="ChEBI" id="CHEBI:15377"/>
        <dbReference type="ChEBI" id="CHEBI:15378"/>
        <dbReference type="ChEBI" id="CHEBI:28868"/>
        <dbReference type="ChEBI" id="CHEBI:57643"/>
        <dbReference type="ChEBI" id="CHEBI:58168"/>
        <dbReference type="EC" id="3.1.1.4"/>
    </reaction>
</comment>
<comment type="catalytic activity">
    <reaction evidence="4 5">
        <text>a 1,2-diacyl-sn-glycero-3-phosphocholine + H2O = a 2-acyl-sn-glycero-3-phosphocholine + a fatty acid + H(+)</text>
        <dbReference type="Rhea" id="RHEA:18689"/>
        <dbReference type="ChEBI" id="CHEBI:15377"/>
        <dbReference type="ChEBI" id="CHEBI:15378"/>
        <dbReference type="ChEBI" id="CHEBI:28868"/>
        <dbReference type="ChEBI" id="CHEBI:57643"/>
        <dbReference type="ChEBI" id="CHEBI:57875"/>
        <dbReference type="EC" id="3.1.1.32"/>
    </reaction>
</comment>
<comment type="catalytic activity">
    <reaction evidence="4">
        <text>1-hexadecanoyl-2-(5Z,8Z,11Z,14Z-eicosatetraenoyl)-sn-glycero-3-phosphocholine + 1,2-di-(9Z-octadecenoyl)-sn-glycero-3-phosphoethanolamine = N-(5Z,8Z,11Z,14Z-eicosatetraenoyl)-1,2-di-(9Z-octadecenoyl)-sn-glycero-3-phosphoethanolamine + 1-hexadecanoyl-sn-glycero-3-phosphocholine + H(+)</text>
        <dbReference type="Rhea" id="RHEA:45476"/>
        <dbReference type="ChEBI" id="CHEBI:15378"/>
        <dbReference type="ChEBI" id="CHEBI:72998"/>
        <dbReference type="ChEBI" id="CHEBI:73003"/>
        <dbReference type="ChEBI" id="CHEBI:74986"/>
        <dbReference type="ChEBI" id="CHEBI:85277"/>
    </reaction>
    <physiologicalReaction direction="left-to-right" evidence="4">
        <dbReference type="Rhea" id="RHEA:45477"/>
    </physiologicalReaction>
</comment>
<comment type="catalytic activity">
    <reaction evidence="4 5">
        <text>1,2-di-(9Z-octadecenoyl)-sn-glycero-3-phosphoethanolamine + 1,2-dihexadecanoyl-sn-glycero-3-phosphocholine = N-hexadecanoyl-1,2-di-(9Z-octadecenoyl)-sn-glycero-3-phosphoethanolamine + 1-hexadecanoyl-sn-glycero-3-phosphocholine + H(+)</text>
        <dbReference type="Rhea" id="RHEA:45176"/>
        <dbReference type="ChEBI" id="CHEBI:15378"/>
        <dbReference type="ChEBI" id="CHEBI:72998"/>
        <dbReference type="ChEBI" id="CHEBI:72999"/>
        <dbReference type="ChEBI" id="CHEBI:74986"/>
        <dbReference type="ChEBI" id="CHEBI:78097"/>
    </reaction>
    <physiologicalReaction direction="left-to-right" evidence="4 5">
        <dbReference type="Rhea" id="RHEA:45177"/>
    </physiologicalReaction>
</comment>
<comment type="catalytic activity">
    <reaction evidence="4 5">
        <text>1,2-di-(9Z-octadecenoyl)-sn-glycero-3-phosphoethanolamine + 1,2-dihexadecanoyl-sn-glycero-3-phosphocholine = N-hexadecanoyl-1,2-di-(9Z-octadecenoyl)-sn-glycero-3-phosphoethanolamine + 2-hexadecanoyl-sn-glycero-3-phosphocholine + H(+)</text>
        <dbReference type="Rhea" id="RHEA:45172"/>
        <dbReference type="ChEBI" id="CHEBI:15378"/>
        <dbReference type="ChEBI" id="CHEBI:72999"/>
        <dbReference type="ChEBI" id="CHEBI:74986"/>
        <dbReference type="ChEBI" id="CHEBI:76078"/>
        <dbReference type="ChEBI" id="CHEBI:78097"/>
    </reaction>
    <physiologicalReaction direction="left-to-right" evidence="4 5">
        <dbReference type="Rhea" id="RHEA:45173"/>
    </physiologicalReaction>
</comment>
<comment type="catalytic activity">
    <reaction evidence="4">
        <text>a 1,2-diacyl-sn-glycero-3-phosphoethanolamine + a 1,2-diacyl-sn-glycero-3-phosphocholine = an N-acyl-1,2-diacyl-sn-glycero-3-phosphoethanolamine + a 1-acyl-sn-glycero-3-phosphocholine + H(+)</text>
        <dbReference type="Rhea" id="RHEA:45192"/>
        <dbReference type="ChEBI" id="CHEBI:15378"/>
        <dbReference type="ChEBI" id="CHEBI:57643"/>
        <dbReference type="ChEBI" id="CHEBI:58168"/>
        <dbReference type="ChEBI" id="CHEBI:62537"/>
        <dbReference type="ChEBI" id="CHEBI:64612"/>
    </reaction>
    <physiologicalReaction direction="left-to-right" evidence="4">
        <dbReference type="Rhea" id="RHEA:45193"/>
    </physiologicalReaction>
</comment>
<comment type="catalytic activity">
    <reaction evidence="4">
        <text>a 1,2-diacyl-sn-glycero-3-phosphoethanolamine + a 1,2-diacyl-sn-glycero-3-phosphocholine = an N-acyl-1,2-diacyl-sn-glycero-3-phosphoethanolamine + a 2-acyl-sn-glycero-3-phosphocholine + H(+)</text>
        <dbReference type="Rhea" id="RHEA:45188"/>
        <dbReference type="ChEBI" id="CHEBI:15378"/>
        <dbReference type="ChEBI" id="CHEBI:57643"/>
        <dbReference type="ChEBI" id="CHEBI:57875"/>
        <dbReference type="ChEBI" id="CHEBI:62537"/>
        <dbReference type="ChEBI" id="CHEBI:64612"/>
    </reaction>
    <physiologicalReaction direction="left-to-right" evidence="4">
        <dbReference type="Rhea" id="RHEA:45189"/>
    </physiologicalReaction>
</comment>
<comment type="catalytic activity">
    <reaction evidence="1">
        <text>1-hexadecanoyl-2-(9Z-octadecenoyl)-sn-glycero-3-phosphocholine + 1,2-di-(9Z-octadecenoyl)-sn-glycero-3-phosphoethanolamine = N,1,2-tri-(9Z-octadecenoyl)-sn-glycero-3-phosphoethanolamine + 1-hexadecanoyl-sn-glycero-3-phosphocholine + H(+)</text>
        <dbReference type="Rhea" id="RHEA:56504"/>
        <dbReference type="ChEBI" id="CHEBI:15378"/>
        <dbReference type="ChEBI" id="CHEBI:72998"/>
        <dbReference type="ChEBI" id="CHEBI:73001"/>
        <dbReference type="ChEBI" id="CHEBI:74986"/>
        <dbReference type="ChEBI" id="CHEBI:85291"/>
    </reaction>
    <physiologicalReaction direction="left-to-right" evidence="1">
        <dbReference type="Rhea" id="RHEA:56505"/>
    </physiologicalReaction>
</comment>
<comment type="interaction">
    <interactant intactId="EBI-10753637">
        <id>Q96KN8</id>
    </interactant>
    <interactant intactId="EBI-1995920">
        <id>Q96JH7</id>
        <label>VCPIP1</label>
    </interactant>
    <organismsDiffer>false</organismsDiffer>
    <experiments>3</experiments>
</comment>
<comment type="interaction">
    <interactant intactId="EBI-10290304">
        <id>Q96KN8-3</id>
    </interactant>
    <interactant intactId="EBI-10299852">
        <id>Q9BVM4</id>
        <label>GGACT</label>
    </interactant>
    <organismsDiffer>false</organismsDiffer>
    <experiments>8</experiments>
</comment>
<comment type="interaction">
    <interactant intactId="EBI-10290304">
        <id>Q96KN8-3</id>
    </interactant>
    <interactant intactId="EBI-618309">
        <id>Q08379</id>
        <label>GOLGA2</label>
    </interactant>
    <organismsDiffer>false</organismsDiffer>
    <experiments>6</experiments>
</comment>
<comment type="interaction">
    <interactant intactId="EBI-10290304">
        <id>Q96KN8-3</id>
    </interactant>
    <interactant intactId="EBI-748420">
        <id>Q9NSC5</id>
        <label>HOMER3</label>
    </interactant>
    <organismsDiffer>false</organismsDiffer>
    <experiments>3</experiments>
</comment>
<comment type="interaction">
    <interactant intactId="EBI-10290304">
        <id>Q96KN8-3</id>
    </interactant>
    <interactant intactId="EBI-10254978">
        <id>Q6ZMS7</id>
        <label>ZNF783</label>
    </interactant>
    <organismsDiffer>false</organismsDiffer>
    <experiments>3</experiments>
</comment>
<comment type="subcellular location">
    <subcellularLocation>
        <location evidence="1">Cytoplasm</location>
        <location evidence="1">Cytosol</location>
    </subcellularLocation>
</comment>
<comment type="alternative products">
    <event type="alternative splicing"/>
    <isoform>
        <id>Q96KN8-1</id>
        <name>1</name>
        <sequence type="displayed"/>
    </isoform>
    <isoform>
        <id>Q96KN8-2</id>
        <name>2</name>
        <sequence type="described" ref="VSP_045826"/>
    </isoform>
    <isoform>
        <id>Q96KN8-3</id>
        <name>3</name>
        <sequence type="described" ref="VSP_045825"/>
    </isoform>
</comment>
<comment type="tissue specificity">
    <text>Highest expression level in testis and pancreas.</text>
</comment>
<comment type="similarity">
    <text evidence="10">Belongs to the H-rev107 family.</text>
</comment>
<keyword id="KW-0012">Acyltransferase</keyword>
<keyword id="KW-0025">Alternative splicing</keyword>
<keyword id="KW-0963">Cytoplasm</keyword>
<keyword id="KW-0378">Hydrolase</keyword>
<keyword id="KW-0443">Lipid metabolism</keyword>
<keyword id="KW-1267">Proteomics identification</keyword>
<keyword id="KW-1185">Reference proteome</keyword>
<keyword id="KW-0808">Transferase</keyword>
<dbReference type="EC" id="2.3.1.-" evidence="4 5"/>
<dbReference type="EC" id="3.1.1.32" evidence="4 5"/>
<dbReference type="EC" id="3.1.1.4" evidence="4 5"/>
<dbReference type="EMBL" id="AB298804">
    <property type="protein sequence ID" value="BAH08633.1"/>
    <property type="molecule type" value="mRNA"/>
</dbReference>
<dbReference type="EMBL" id="AJ416558">
    <property type="protein sequence ID" value="CAC94942.1"/>
    <property type="molecule type" value="mRNA"/>
</dbReference>
<dbReference type="EMBL" id="AP000484">
    <property type="status" value="NOT_ANNOTATED_CDS"/>
    <property type="molecule type" value="Genomic_DNA"/>
</dbReference>
<dbReference type="EMBL" id="AP001591">
    <property type="status" value="NOT_ANNOTATED_CDS"/>
    <property type="molecule type" value="Genomic_DNA"/>
</dbReference>
<dbReference type="EMBL" id="CH471076">
    <property type="protein sequence ID" value="EAW74150.1"/>
    <property type="molecule type" value="Genomic_DNA"/>
</dbReference>
<dbReference type="CCDS" id="CCDS53646.1">
    <molecule id="Q96KN8-3"/>
</dbReference>
<dbReference type="CCDS" id="CCDS53647.1">
    <molecule id="Q96KN8-2"/>
</dbReference>
<dbReference type="CCDS" id="CCDS8044.1">
    <molecule id="Q96KN8-1"/>
</dbReference>
<dbReference type="RefSeq" id="NP_001140200.2">
    <molecule id="Q96KN8-2"/>
    <property type="nucleotide sequence ID" value="NM_001146728.2"/>
</dbReference>
<dbReference type="RefSeq" id="NP_001140201.2">
    <molecule id="Q96KN8-3"/>
    <property type="nucleotide sequence ID" value="NM_001146729.2"/>
</dbReference>
<dbReference type="RefSeq" id="NP_473449.2">
    <molecule id="Q96KN8-1"/>
    <property type="nucleotide sequence ID" value="NM_054108.4"/>
</dbReference>
<dbReference type="SMR" id="Q96KN8"/>
<dbReference type="BioGRID" id="125580">
    <property type="interactions" value="7"/>
</dbReference>
<dbReference type="FunCoup" id="Q96KN8">
    <property type="interactions" value="287"/>
</dbReference>
<dbReference type="IntAct" id="Q96KN8">
    <property type="interactions" value="5"/>
</dbReference>
<dbReference type="STRING" id="9606.ENSP00000301790"/>
<dbReference type="BindingDB" id="Q96KN8"/>
<dbReference type="ChEMBL" id="CHEMBL4630850"/>
<dbReference type="SwissLipids" id="SLP:000001126"/>
<dbReference type="iPTMnet" id="Q96KN8"/>
<dbReference type="BioMuta" id="HRASLS5"/>
<dbReference type="DMDM" id="296434533"/>
<dbReference type="MassIVE" id="Q96KN8"/>
<dbReference type="PaxDb" id="9606-ENSP00000301790"/>
<dbReference type="PeptideAtlas" id="Q96KN8"/>
<dbReference type="ProteomicsDB" id="24961"/>
<dbReference type="ProteomicsDB" id="26717"/>
<dbReference type="ProteomicsDB" id="77095">
    <molecule id="Q96KN8-1"/>
</dbReference>
<dbReference type="Antibodypedia" id="43875">
    <property type="antibodies" value="78 antibodies from 18 providers"/>
</dbReference>
<dbReference type="DNASU" id="117245"/>
<dbReference type="Ensembl" id="ENST00000301790.4">
    <molecule id="Q96KN8-1"/>
    <property type="protein sequence ID" value="ENSP00000301790.4"/>
    <property type="gene ID" value="ENSG00000168004.10"/>
</dbReference>
<dbReference type="Ensembl" id="ENST00000539221.5">
    <molecule id="Q96KN8-2"/>
    <property type="protein sequence ID" value="ENSP00000443873.1"/>
    <property type="gene ID" value="ENSG00000168004.10"/>
</dbReference>
<dbReference type="Ensembl" id="ENST00000540857.6">
    <molecule id="Q96KN8-3"/>
    <property type="protein sequence ID" value="ENSP00000444809.1"/>
    <property type="gene ID" value="ENSG00000168004.10"/>
</dbReference>
<dbReference type="GeneID" id="117245"/>
<dbReference type="KEGG" id="hsa:117245"/>
<dbReference type="MANE-Select" id="ENST00000540857.6">
    <molecule id="Q96KN8-3"/>
    <property type="protein sequence ID" value="ENSP00000444809.1"/>
    <property type="RefSeq nucleotide sequence ID" value="NM_001146729.2"/>
    <property type="RefSeq protein sequence ID" value="NP_001140201.2"/>
</dbReference>
<dbReference type="UCSC" id="uc001nwy.3">
    <molecule id="Q96KN8-1"/>
    <property type="organism name" value="human"/>
</dbReference>
<dbReference type="AGR" id="HGNC:24978"/>
<dbReference type="CTD" id="117245"/>
<dbReference type="DisGeNET" id="117245"/>
<dbReference type="GeneCards" id="PLAAT5"/>
<dbReference type="HGNC" id="HGNC:24978">
    <property type="gene designation" value="PLAAT5"/>
</dbReference>
<dbReference type="HPA" id="ENSG00000168004">
    <property type="expression patterns" value="Group enriched (adipose tissue, pancreas, testis)"/>
</dbReference>
<dbReference type="MIM" id="611474">
    <property type="type" value="gene"/>
</dbReference>
<dbReference type="neXtProt" id="NX_Q96KN8"/>
<dbReference type="OpenTargets" id="ENSG00000168004"/>
<dbReference type="VEuPathDB" id="HostDB:ENSG00000168004"/>
<dbReference type="eggNOG" id="ENOG502S0JN">
    <property type="taxonomic scope" value="Eukaryota"/>
</dbReference>
<dbReference type="GeneTree" id="ENSGT00940000162436"/>
<dbReference type="HOGENOM" id="CLU_070482_0_0_1"/>
<dbReference type="InParanoid" id="Q96KN8"/>
<dbReference type="OMA" id="VKYSRLQ"/>
<dbReference type="OrthoDB" id="421951at2759"/>
<dbReference type="PAN-GO" id="Q96KN8">
    <property type="GO annotations" value="5 GO annotations based on evolutionary models"/>
</dbReference>
<dbReference type="PhylomeDB" id="Q96KN8"/>
<dbReference type="TreeFam" id="TF330836"/>
<dbReference type="BioCyc" id="MetaCyc:ENSG00000168004-MONOMER"/>
<dbReference type="PathwayCommons" id="Q96KN8"/>
<dbReference type="Reactome" id="R-HSA-1482839">
    <property type="pathway name" value="Acyl chain remodelling of PE"/>
</dbReference>
<dbReference type="SignaLink" id="Q96KN8"/>
<dbReference type="BioGRID-ORCS" id="117245">
    <property type="hits" value="19 hits in 1144 CRISPR screens"/>
</dbReference>
<dbReference type="ChiTaRS" id="HRASLS5">
    <property type="organism name" value="human"/>
</dbReference>
<dbReference type="GenomeRNAi" id="117245"/>
<dbReference type="Pharos" id="Q96KN8">
    <property type="development level" value="Tchem"/>
</dbReference>
<dbReference type="PRO" id="PR:Q96KN8"/>
<dbReference type="Proteomes" id="UP000005640">
    <property type="component" value="Chromosome 11"/>
</dbReference>
<dbReference type="RNAct" id="Q96KN8">
    <property type="molecule type" value="protein"/>
</dbReference>
<dbReference type="Bgee" id="ENSG00000168004">
    <property type="expression patterns" value="Expressed in sperm and 132 other cell types or tissues"/>
</dbReference>
<dbReference type="ExpressionAtlas" id="Q96KN8">
    <property type="expression patterns" value="baseline and differential"/>
</dbReference>
<dbReference type="GO" id="GO:0005737">
    <property type="term" value="C:cytoplasm"/>
    <property type="evidence" value="ECO:0000318"/>
    <property type="project" value="GO_Central"/>
</dbReference>
<dbReference type="GO" id="GO:0005829">
    <property type="term" value="C:cytosol"/>
    <property type="evidence" value="ECO:0007669"/>
    <property type="project" value="UniProtKB-SubCell"/>
</dbReference>
<dbReference type="GO" id="GO:0016410">
    <property type="term" value="F:N-acyltransferase activity"/>
    <property type="evidence" value="ECO:0000314"/>
    <property type="project" value="UniProtKB"/>
</dbReference>
<dbReference type="GO" id="GO:0008970">
    <property type="term" value="F:phospholipase A1 activity"/>
    <property type="evidence" value="ECO:0000314"/>
    <property type="project" value="UniProtKB"/>
</dbReference>
<dbReference type="GO" id="GO:0004623">
    <property type="term" value="F:phospholipase A2 activity"/>
    <property type="evidence" value="ECO:0000314"/>
    <property type="project" value="UniProtKB"/>
</dbReference>
<dbReference type="GO" id="GO:0070292">
    <property type="term" value="P:N-acylphosphatidylethanolamine metabolic process"/>
    <property type="evidence" value="ECO:0000314"/>
    <property type="project" value="UniProtKB"/>
</dbReference>
<dbReference type="FunFam" id="3.90.1720.10:FF:000002">
    <property type="entry name" value="HRAS like suppressor 2"/>
    <property type="match status" value="1"/>
</dbReference>
<dbReference type="Gene3D" id="3.90.1720.10">
    <property type="entry name" value="endopeptidase domain like (from Nostoc punctiforme)"/>
    <property type="match status" value="1"/>
</dbReference>
<dbReference type="InterPro" id="IPR051496">
    <property type="entry name" value="H-rev107_PLA/AT"/>
</dbReference>
<dbReference type="InterPro" id="IPR007053">
    <property type="entry name" value="LRAT_dom"/>
</dbReference>
<dbReference type="PANTHER" id="PTHR13943">
    <property type="entry name" value="HRAS-LIKE SUPPRESSOR - RELATED"/>
    <property type="match status" value="1"/>
</dbReference>
<dbReference type="PANTHER" id="PTHR13943:SF2">
    <property type="entry name" value="PHOSPHOLIPASE A AND ACYLTRANSFERASE 5"/>
    <property type="match status" value="1"/>
</dbReference>
<dbReference type="Pfam" id="PF04970">
    <property type="entry name" value="LRAT"/>
    <property type="match status" value="1"/>
</dbReference>
<dbReference type="PROSITE" id="PS51934">
    <property type="entry name" value="LRAT"/>
    <property type="match status" value="1"/>
</dbReference>
<evidence type="ECO:0000250" key="1">
    <source>
        <dbReference type="UniProtKB" id="Q4KLN5"/>
    </source>
</evidence>
<evidence type="ECO:0000255" key="2">
    <source>
        <dbReference type="PROSITE-ProRule" id="PRU01283"/>
    </source>
</evidence>
<evidence type="ECO:0000256" key="3">
    <source>
        <dbReference type="SAM" id="MobiDB-lite"/>
    </source>
</evidence>
<evidence type="ECO:0000269" key="4">
    <source>
    </source>
</evidence>
<evidence type="ECO:0000269" key="5">
    <source>
    </source>
</evidence>
<evidence type="ECO:0000269" key="6">
    <source ref="2"/>
</evidence>
<evidence type="ECO:0000269" key="7">
    <source ref="4"/>
</evidence>
<evidence type="ECO:0000303" key="8">
    <source>
    </source>
</evidence>
<evidence type="ECO:0000303" key="9">
    <source>
    </source>
</evidence>
<evidence type="ECO:0000305" key="10"/>
<evidence type="ECO:0000312" key="11">
    <source>
        <dbReference type="HGNC" id="HGNC:24978"/>
    </source>
</evidence>
<protein>
    <recommendedName>
        <fullName evidence="11">Phospholipase A and acyltransferase 5</fullName>
    </recommendedName>
    <alternativeName>
        <fullName evidence="8">Ca(2+)-independent N-acyltransferase</fullName>
        <shortName evidence="8">iNAT</shortName>
        <ecNumber evidence="4 5">2.3.1.-</ecNumber>
        <ecNumber evidence="4 5">3.1.1.32</ecNumber>
        <ecNumber evidence="4 5">3.1.1.4</ecNumber>
    </alternativeName>
    <alternativeName>
        <fullName>H-rev107-like protein 5</fullName>
    </alternativeName>
    <alternativeName>
        <fullName>HRAS-like suppressor 5</fullName>
        <shortName>HRSL5</shortName>
    </alternativeName>
</protein>
<gene>
    <name evidence="11" type="primary">PLAAT5</name>
    <name type="synonym">HRASLS5</name>
    <name type="synonym">HRLP5</name>
</gene>
<name>PLAT5_HUMAN</name>
<proteinExistence type="evidence at protein level"/>
<reference key="1">
    <citation type="journal article" date="2009" name="Biochim. Biophys. Acta">
        <title>cDNA cloning and characterization of human and mouse Ca(2+)-independent phosphatidylethanolamine N-acyltransferases.</title>
        <authorList>
            <person name="Jin X.-H."/>
            <person name="Uyama T."/>
            <person name="Wang J."/>
            <person name="Okamoto Y."/>
            <person name="Tonai T."/>
            <person name="Ueda N."/>
        </authorList>
    </citation>
    <scope>NUCLEOTIDE SEQUENCE [MRNA] (ISOFORM 1)</scope>
    <scope>VARIANT GLY-31</scope>
    <scope>FUNCTION (ISOFORM 1)</scope>
    <scope>CATALYTIC ACTIVITY (ISOFORM 1)</scope>
    <source>
        <tissue>Testis</tissue>
    </source>
</reference>
<reference key="2">
    <citation type="submission" date="2001-10" db="EMBL/GenBank/DDBJ databases">
        <title>Identification of a novel member of the H-rev107 protein family.</title>
        <authorList>
            <person name="Hughes P.J."/>
            <person name="Stanway G."/>
        </authorList>
    </citation>
    <scope>NUCLEOTIDE SEQUENCE [MRNA] (ISOFORM 1)</scope>
    <scope>VARIANT GLY-31</scope>
</reference>
<reference key="3">
    <citation type="journal article" date="2006" name="Nature">
        <title>Human chromosome 11 DNA sequence and analysis including novel gene identification.</title>
        <authorList>
            <person name="Taylor T.D."/>
            <person name="Noguchi H."/>
            <person name="Totoki Y."/>
            <person name="Toyoda A."/>
            <person name="Kuroki Y."/>
            <person name="Dewar K."/>
            <person name="Lloyd C."/>
            <person name="Itoh T."/>
            <person name="Takeda T."/>
            <person name="Kim D.-W."/>
            <person name="She X."/>
            <person name="Barlow K.F."/>
            <person name="Bloom T."/>
            <person name="Bruford E."/>
            <person name="Chang J.L."/>
            <person name="Cuomo C.A."/>
            <person name="Eichler E."/>
            <person name="FitzGerald M.G."/>
            <person name="Jaffe D.B."/>
            <person name="LaButti K."/>
            <person name="Nicol R."/>
            <person name="Park H.-S."/>
            <person name="Seaman C."/>
            <person name="Sougnez C."/>
            <person name="Yang X."/>
            <person name="Zimmer A.R."/>
            <person name="Zody M.C."/>
            <person name="Birren B.W."/>
            <person name="Nusbaum C."/>
            <person name="Fujiyama A."/>
            <person name="Hattori M."/>
            <person name="Rogers J."/>
            <person name="Lander E.S."/>
            <person name="Sakaki Y."/>
        </authorList>
    </citation>
    <scope>NUCLEOTIDE SEQUENCE [LARGE SCALE GENOMIC DNA]</scope>
</reference>
<reference key="4">
    <citation type="submission" date="2005-07" db="EMBL/GenBank/DDBJ databases">
        <authorList>
            <person name="Mural R.J."/>
            <person name="Istrail S."/>
            <person name="Sutton G."/>
            <person name="Florea L."/>
            <person name="Halpern A.L."/>
            <person name="Mobarry C.M."/>
            <person name="Lippert R."/>
            <person name="Walenz B."/>
            <person name="Shatkay H."/>
            <person name="Dew I."/>
            <person name="Miller J.R."/>
            <person name="Flanigan M.J."/>
            <person name="Edwards N.J."/>
            <person name="Bolanos R."/>
            <person name="Fasulo D."/>
            <person name="Halldorsson B.V."/>
            <person name="Hannenhalli S."/>
            <person name="Turner R."/>
            <person name="Yooseph S."/>
            <person name="Lu F."/>
            <person name="Nusskern D.R."/>
            <person name="Shue B.C."/>
            <person name="Zheng X.H."/>
            <person name="Zhong F."/>
            <person name="Delcher A.L."/>
            <person name="Huson D.H."/>
            <person name="Kravitz S.A."/>
            <person name="Mouchard L."/>
            <person name="Reinert K."/>
            <person name="Remington K.A."/>
            <person name="Clark A.G."/>
            <person name="Waterman M.S."/>
            <person name="Eichler E.E."/>
            <person name="Adams M.D."/>
            <person name="Hunkapiller M.W."/>
            <person name="Myers E.W."/>
            <person name="Venter J.C."/>
        </authorList>
    </citation>
    <scope>NUCLEOTIDE SEQUENCE [LARGE SCALE GENOMIC DNA]</scope>
    <scope>VARIANT GLY-31</scope>
</reference>
<reference key="5">
    <citation type="journal article" date="2012" name="J. Biol. Chem.">
        <title>Generation of N-acylphosphatidylethanolamine by members of the phospholipase A/acyltransferase (PLA/AT) family.</title>
        <authorList>
            <person name="Uyama T."/>
            <person name="Ikematsu N."/>
            <person name="Inoue M."/>
            <person name="Shinohara N."/>
            <person name="Jin X.H."/>
            <person name="Tsuboi K."/>
            <person name="Tonai T."/>
            <person name="Tokumura A."/>
            <person name="Ueda N."/>
        </authorList>
    </citation>
    <scope>FUNCTION</scope>
    <scope>CATALYTIC ACTIVITY</scope>
</reference>
<reference key="6">
    <citation type="journal article" date="2015" name="J. Biomed. Sci.">
        <title>The HRASLS (PLA/AT) subfamily of enzymes.</title>
        <authorList>
            <person name="Mardian E.B."/>
            <person name="Bradley R.M."/>
            <person name="Duncan R.E."/>
        </authorList>
    </citation>
    <scope>REVIEW</scope>
</reference>
<accession>Q96KN8</accession>
<accession>B7X6T1</accession>
<accession>F5GZ87</accession>
<accession>F5H4Y9</accession>